<evidence type="ECO:0000255" key="1">
    <source>
        <dbReference type="HAMAP-Rule" id="MF_01337"/>
    </source>
</evidence>
<evidence type="ECO:0000305" key="2"/>
<dbReference type="EMBL" id="AP008230">
    <property type="protein sequence ID" value="BAE82276.1"/>
    <property type="molecule type" value="Genomic_DNA"/>
</dbReference>
<dbReference type="RefSeq" id="WP_011459106.1">
    <property type="nucleotide sequence ID" value="NC_007907.1"/>
</dbReference>
<dbReference type="SMR" id="Q250L6"/>
<dbReference type="STRING" id="138119.DSY0487"/>
<dbReference type="KEGG" id="dsy:DSY0487"/>
<dbReference type="eggNOG" id="COG0256">
    <property type="taxonomic scope" value="Bacteria"/>
</dbReference>
<dbReference type="HOGENOM" id="CLU_098841_0_1_9"/>
<dbReference type="Proteomes" id="UP000001946">
    <property type="component" value="Chromosome"/>
</dbReference>
<dbReference type="GO" id="GO:0022625">
    <property type="term" value="C:cytosolic large ribosomal subunit"/>
    <property type="evidence" value="ECO:0007669"/>
    <property type="project" value="TreeGrafter"/>
</dbReference>
<dbReference type="GO" id="GO:0008097">
    <property type="term" value="F:5S rRNA binding"/>
    <property type="evidence" value="ECO:0007669"/>
    <property type="project" value="TreeGrafter"/>
</dbReference>
<dbReference type="GO" id="GO:0003735">
    <property type="term" value="F:structural constituent of ribosome"/>
    <property type="evidence" value="ECO:0007669"/>
    <property type="project" value="InterPro"/>
</dbReference>
<dbReference type="GO" id="GO:0006412">
    <property type="term" value="P:translation"/>
    <property type="evidence" value="ECO:0007669"/>
    <property type="project" value="UniProtKB-UniRule"/>
</dbReference>
<dbReference type="CDD" id="cd00432">
    <property type="entry name" value="Ribosomal_L18_L5e"/>
    <property type="match status" value="1"/>
</dbReference>
<dbReference type="FunFam" id="3.30.420.100:FF:000001">
    <property type="entry name" value="50S ribosomal protein L18"/>
    <property type="match status" value="1"/>
</dbReference>
<dbReference type="Gene3D" id="3.30.420.100">
    <property type="match status" value="1"/>
</dbReference>
<dbReference type="HAMAP" id="MF_01337_B">
    <property type="entry name" value="Ribosomal_uL18_B"/>
    <property type="match status" value="1"/>
</dbReference>
<dbReference type="InterPro" id="IPR004389">
    <property type="entry name" value="Ribosomal_uL18_bac-type"/>
</dbReference>
<dbReference type="InterPro" id="IPR005484">
    <property type="entry name" value="Ribosomal_uL18_bac/euk"/>
</dbReference>
<dbReference type="NCBIfam" id="TIGR00060">
    <property type="entry name" value="L18_bact"/>
    <property type="match status" value="1"/>
</dbReference>
<dbReference type="PANTHER" id="PTHR12899">
    <property type="entry name" value="39S RIBOSOMAL PROTEIN L18, MITOCHONDRIAL"/>
    <property type="match status" value="1"/>
</dbReference>
<dbReference type="PANTHER" id="PTHR12899:SF3">
    <property type="entry name" value="LARGE RIBOSOMAL SUBUNIT PROTEIN UL18M"/>
    <property type="match status" value="1"/>
</dbReference>
<dbReference type="Pfam" id="PF00861">
    <property type="entry name" value="Ribosomal_L18p"/>
    <property type="match status" value="1"/>
</dbReference>
<dbReference type="SUPFAM" id="SSF53137">
    <property type="entry name" value="Translational machinery components"/>
    <property type="match status" value="1"/>
</dbReference>
<keyword id="KW-1185">Reference proteome</keyword>
<keyword id="KW-0687">Ribonucleoprotein</keyword>
<keyword id="KW-0689">Ribosomal protein</keyword>
<keyword id="KW-0694">RNA-binding</keyword>
<keyword id="KW-0699">rRNA-binding</keyword>
<sequence>MITQIDRKAIRMKKHKRVRKSVFGTAERPRLAVFRSLNHIYAQVINDELGVTLATASSLDAEFKAAELAGGNVEGAKKVGDLVAKRALEKGVSKVVFDRGGNIYHGRIAAVAEAAREAGLEF</sequence>
<reference key="1">
    <citation type="journal article" date="2006" name="J. Bacteriol.">
        <title>Complete genome sequence of the dehalorespiring bacterium Desulfitobacterium hafniense Y51 and comparison with Dehalococcoides ethenogenes 195.</title>
        <authorList>
            <person name="Nonaka H."/>
            <person name="Keresztes G."/>
            <person name="Shinoda Y."/>
            <person name="Ikenaga Y."/>
            <person name="Abe M."/>
            <person name="Naito K."/>
            <person name="Inatomi K."/>
            <person name="Furukawa K."/>
            <person name="Inui M."/>
            <person name="Yukawa H."/>
        </authorList>
    </citation>
    <scope>NUCLEOTIDE SEQUENCE [LARGE SCALE GENOMIC DNA]</scope>
    <source>
        <strain>Y51</strain>
    </source>
</reference>
<name>RL18_DESHY</name>
<feature type="chain" id="PRO_0000251308" description="Large ribosomal subunit protein uL18">
    <location>
        <begin position="1"/>
        <end position="122"/>
    </location>
</feature>
<comment type="function">
    <text evidence="1">This is one of the proteins that bind and probably mediate the attachment of the 5S RNA into the large ribosomal subunit, where it forms part of the central protuberance.</text>
</comment>
<comment type="subunit">
    <text evidence="1">Part of the 50S ribosomal subunit; part of the 5S rRNA/L5/L18/L25 subcomplex. Contacts the 5S and 23S rRNAs.</text>
</comment>
<comment type="similarity">
    <text evidence="1">Belongs to the universal ribosomal protein uL18 family.</text>
</comment>
<gene>
    <name evidence="1" type="primary">rplR</name>
    <name type="ordered locus">DSY0487</name>
</gene>
<organism>
    <name type="scientific">Desulfitobacterium hafniense (strain Y51)</name>
    <dbReference type="NCBI Taxonomy" id="138119"/>
    <lineage>
        <taxon>Bacteria</taxon>
        <taxon>Bacillati</taxon>
        <taxon>Bacillota</taxon>
        <taxon>Clostridia</taxon>
        <taxon>Eubacteriales</taxon>
        <taxon>Desulfitobacteriaceae</taxon>
        <taxon>Desulfitobacterium</taxon>
    </lineage>
</organism>
<proteinExistence type="inferred from homology"/>
<accession>Q250L6</accession>
<protein>
    <recommendedName>
        <fullName evidence="1">Large ribosomal subunit protein uL18</fullName>
    </recommendedName>
    <alternativeName>
        <fullName evidence="2">50S ribosomal protein L18</fullName>
    </alternativeName>
</protein>